<keyword id="KW-0175">Coiled coil</keyword>
<keyword id="KW-0963">Cytoplasm</keyword>
<keyword id="KW-0903">Direct protein sequencing</keyword>
<keyword id="KW-0403">Intermediate filament</keyword>
<proteinExistence type="evidence at protein level"/>
<reference key="1">
    <citation type="journal article" date="1989" name="EMBO J.">
        <title>Cytoplasmic intermediate filament proteins of invertebrates are closer to nuclear lamins than are vertebrate intermediate filament proteins; sequence characterization of two muscle proteins of a nematode.</title>
        <authorList>
            <person name="Weber K."/>
            <person name="Plessmann U."/>
            <person name="Ulrich W."/>
        </authorList>
    </citation>
    <scope>PROTEIN SEQUENCE</scope>
</reference>
<protein>
    <recommendedName>
        <fullName>Intermediate filament protein B</fullName>
        <shortName>IF-B</shortName>
    </recommendedName>
</protein>
<name>IFEB_ASCSU</name>
<evidence type="ECO:0000255" key="1">
    <source>
        <dbReference type="PROSITE-ProRule" id="PRU01187"/>
    </source>
</evidence>
<evidence type="ECO:0000255" key="2">
    <source>
        <dbReference type="PROSITE-ProRule" id="PRU01188"/>
    </source>
</evidence>
<evidence type="ECO:0000256" key="3">
    <source>
        <dbReference type="SAM" id="MobiDB-lite"/>
    </source>
</evidence>
<sequence length="589" mass="67695">SLKQSQESSEYEIAYRSTIQPRTAVRTQSRQSGAYSTGAVSGGGGRVLKMVTEMGSASIGGISPALSANAAKSFLEATDKEKKEMQGLNDRLGNYIDRVKKLEEQNRKLVADLDELRGRWGKDTSEIKIQYSDSLRDARKEIDDGARRKAEIDVKVARLRDDLAELRNRYEDVQHRRESDREKINQWQHAIEDAQSELEMLRARWRQLTEEEKRLNGDNARIWEELQKARNDLDEETLGRIDFQNQVQTLMEELEFLRRVHEQEVKELQALLAQAPADTREFFKNELALAIRDIKDEYDYIAKQGKQDMESWYKLKVSEVQGSANRANMESSYQREEVKRMRDNIGDLRGKLGDLEAKNALLEKEVQNLNYQLNDDQRQYEAALNDRDATLRRMREECQTLVAELQALLDTKQMLDAEIAIYRKMLEGEESRVGLRQMVEQVVKTHSLQQQEDTDSTRNVRGEVSTKTTFQRSAKGNVTISECDPNGKFITLENTHRSKDENLGEHRLKRKLDNRREIVYTIPPNTVLKAGRTMKIYARDQGGIHNPPDTLVFDGENTWGIGANVVTSLINKDGDERATHTQKTIQTGQ</sequence>
<organism>
    <name type="scientific">Ascaris suum</name>
    <name type="common">Pig roundworm</name>
    <name type="synonym">Ascaris lumbricoides</name>
    <dbReference type="NCBI Taxonomy" id="6253"/>
    <lineage>
        <taxon>Eukaryota</taxon>
        <taxon>Metazoa</taxon>
        <taxon>Ecdysozoa</taxon>
        <taxon>Nematoda</taxon>
        <taxon>Chromadorea</taxon>
        <taxon>Rhabditida</taxon>
        <taxon>Spirurina</taxon>
        <taxon>Ascaridomorpha</taxon>
        <taxon>Ascaridoidea</taxon>
        <taxon>Ascarididae</taxon>
        <taxon>Ascaris</taxon>
    </lineage>
</organism>
<comment type="subunit">
    <text>A and B can form homopolymers.</text>
</comment>
<comment type="subcellular location">
    <subcellularLocation>
        <location>Cytoplasm</location>
    </subcellularLocation>
</comment>
<comment type="tissue specificity">
    <text>Giant body muscle cells.</text>
</comment>
<comment type="similarity">
    <text evidence="2">Belongs to the intermediate filament family.</text>
</comment>
<feature type="chain" id="PRO_0000063833" description="Intermediate filament protein B">
    <location>
        <begin position="1"/>
        <end position="589"/>
    </location>
</feature>
<feature type="domain" description="IF rod" evidence="2">
    <location>
        <begin position="81"/>
        <end position="433"/>
    </location>
</feature>
<feature type="domain" description="LTD" evidence="1">
    <location>
        <begin position="466"/>
        <end position="584"/>
    </location>
</feature>
<feature type="region of interest" description="Head">
    <location>
        <begin position="1"/>
        <end position="84"/>
    </location>
</feature>
<feature type="region of interest" description="Coil 1A">
    <location>
        <begin position="85"/>
        <end position="116"/>
    </location>
</feature>
<feature type="region of interest" description="Linker 1">
    <location>
        <begin position="117"/>
        <end position="130"/>
    </location>
</feature>
<feature type="region of interest" description="Coil 1B">
    <location>
        <begin position="131"/>
        <end position="268"/>
    </location>
</feature>
<feature type="region of interest" description="Linker 12">
    <location>
        <begin position="269"/>
        <end position="285"/>
    </location>
</feature>
<feature type="region of interest" description="Coil 2">
    <location>
        <begin position="286"/>
        <end position="433"/>
    </location>
</feature>
<feature type="region of interest" description="Tail">
    <location>
        <begin position="434"/>
        <end position="589"/>
    </location>
</feature>
<feature type="region of interest" description="Disordered" evidence="3">
    <location>
        <begin position="446"/>
        <end position="470"/>
    </location>
</feature>
<dbReference type="SMR" id="P23731"/>
<dbReference type="GO" id="GO:0005737">
    <property type="term" value="C:cytoplasm"/>
    <property type="evidence" value="ECO:0007669"/>
    <property type="project" value="UniProtKB-SubCell"/>
</dbReference>
<dbReference type="GO" id="GO:0005882">
    <property type="term" value="C:intermediate filament"/>
    <property type="evidence" value="ECO:0000314"/>
    <property type="project" value="CACAO"/>
</dbReference>
<dbReference type="GO" id="GO:0005635">
    <property type="term" value="C:nuclear envelope"/>
    <property type="evidence" value="ECO:0007669"/>
    <property type="project" value="TreeGrafter"/>
</dbReference>
<dbReference type="GO" id="GO:0005652">
    <property type="term" value="C:nuclear lamina"/>
    <property type="evidence" value="ECO:0007669"/>
    <property type="project" value="TreeGrafter"/>
</dbReference>
<dbReference type="GO" id="GO:0005200">
    <property type="term" value="F:structural constituent of cytoskeleton"/>
    <property type="evidence" value="ECO:0007669"/>
    <property type="project" value="TreeGrafter"/>
</dbReference>
<dbReference type="GO" id="GO:0031507">
    <property type="term" value="P:heterochromatin formation"/>
    <property type="evidence" value="ECO:0007669"/>
    <property type="project" value="TreeGrafter"/>
</dbReference>
<dbReference type="GO" id="GO:0006998">
    <property type="term" value="P:nuclear envelope organization"/>
    <property type="evidence" value="ECO:0007669"/>
    <property type="project" value="TreeGrafter"/>
</dbReference>
<dbReference type="GO" id="GO:0007097">
    <property type="term" value="P:nuclear migration"/>
    <property type="evidence" value="ECO:0007669"/>
    <property type="project" value="TreeGrafter"/>
</dbReference>
<dbReference type="GO" id="GO:0051664">
    <property type="term" value="P:nuclear pore localization"/>
    <property type="evidence" value="ECO:0007669"/>
    <property type="project" value="TreeGrafter"/>
</dbReference>
<dbReference type="GO" id="GO:0090435">
    <property type="term" value="P:protein localization to nuclear envelope"/>
    <property type="evidence" value="ECO:0007669"/>
    <property type="project" value="TreeGrafter"/>
</dbReference>
<dbReference type="FunFam" id="1.20.5.1160:FF:000016">
    <property type="entry name" value="Intermediate filament protein A"/>
    <property type="match status" value="1"/>
</dbReference>
<dbReference type="FunFam" id="2.60.40.1260:FF:000003">
    <property type="entry name" value="Intermediate filament protein A"/>
    <property type="match status" value="1"/>
</dbReference>
<dbReference type="FunFam" id="1.20.5.170:FF:000058">
    <property type="entry name" value="Intermediate filament protein B"/>
    <property type="match status" value="1"/>
</dbReference>
<dbReference type="Gene3D" id="1.20.5.170">
    <property type="match status" value="1"/>
</dbReference>
<dbReference type="Gene3D" id="2.60.40.1260">
    <property type="entry name" value="Lamin Tail domain"/>
    <property type="match status" value="1"/>
</dbReference>
<dbReference type="Gene3D" id="1.20.5.500">
    <property type="entry name" value="Single helix bin"/>
    <property type="match status" value="1"/>
</dbReference>
<dbReference type="Gene3D" id="1.20.5.1160">
    <property type="entry name" value="Vasodilator-stimulated phosphoprotein"/>
    <property type="match status" value="1"/>
</dbReference>
<dbReference type="InterPro" id="IPR018039">
    <property type="entry name" value="IF_conserved"/>
</dbReference>
<dbReference type="InterPro" id="IPR039008">
    <property type="entry name" value="IF_rod_dom"/>
</dbReference>
<dbReference type="InterPro" id="IPR016451">
    <property type="entry name" value="Intermed_filament_ifa/ifb"/>
</dbReference>
<dbReference type="InterPro" id="IPR001322">
    <property type="entry name" value="Lamin_tail_dom"/>
</dbReference>
<dbReference type="InterPro" id="IPR036415">
    <property type="entry name" value="Lamin_tail_dom_sf"/>
</dbReference>
<dbReference type="PANTHER" id="PTHR45721:SF6">
    <property type="entry name" value="INTERMEDIATE FILAMENT PROTEIN IFB-1"/>
    <property type="match status" value="1"/>
</dbReference>
<dbReference type="PANTHER" id="PTHR45721">
    <property type="entry name" value="LAMIN DM0-RELATED"/>
    <property type="match status" value="1"/>
</dbReference>
<dbReference type="Pfam" id="PF00038">
    <property type="entry name" value="Filament"/>
    <property type="match status" value="1"/>
</dbReference>
<dbReference type="Pfam" id="PF00932">
    <property type="entry name" value="LTD"/>
    <property type="match status" value="1"/>
</dbReference>
<dbReference type="PIRSF" id="PIRSF005546">
    <property type="entry name" value="Intermed_filamnt_Ifb-2"/>
    <property type="match status" value="1"/>
</dbReference>
<dbReference type="SMART" id="SM01391">
    <property type="entry name" value="Filament"/>
    <property type="match status" value="1"/>
</dbReference>
<dbReference type="SUPFAM" id="SSF64593">
    <property type="entry name" value="Intermediate filament protein, coiled coil region"/>
    <property type="match status" value="2"/>
</dbReference>
<dbReference type="SUPFAM" id="SSF74853">
    <property type="entry name" value="Lamin A/C globular tail domain"/>
    <property type="match status" value="1"/>
</dbReference>
<dbReference type="PROSITE" id="PS00226">
    <property type="entry name" value="IF_ROD_1"/>
    <property type="match status" value="1"/>
</dbReference>
<dbReference type="PROSITE" id="PS51842">
    <property type="entry name" value="IF_ROD_2"/>
    <property type="match status" value="1"/>
</dbReference>
<dbReference type="PROSITE" id="PS51841">
    <property type="entry name" value="LTD"/>
    <property type="match status" value="1"/>
</dbReference>
<accession>P23731</accession>